<evidence type="ECO:0000255" key="1">
    <source>
        <dbReference type="HAMAP-Rule" id="MF_04071"/>
    </source>
</evidence>
<proteinExistence type="inferred from homology"/>
<sequence length="469" mass="51322">MNPNQKIITIGSICMVVGIISLILQIGNIISIWVSHSIQTGNQNQPETCNQSIITYENNTWVNQTYVNISNTNFVAEQAVAPVALAGNSSLCPISGWAIYSKDNGIRIGSRGDVFVIREPFISCSHLECRTLFLTQGALLNDKHSNGTVKDRSPYRTLMSCPVGEAPSPYNSRFESVAWSASACHDGISWLTVGISGPDNGAVAVLKYNGIITDTIKSWRNNILRTQESECACVNGSCFTVMTDGPSNGQASYKIFKIEKGKVVKSVELNAPNYHYEECSCYPDAGEITCVCRDNWHGSNRPWVSFNQNLEYQIGYICSGVFGDNPRPNDGTGSCGPVSSNGAYGVKGFSFKYGNGVWIGRTKSTSSRSGFEMVWDPNGWTETDSSFSVKQDIVAITDWSGYSGSFVQHPELTGLDCMRPCFWVELIRGRPKENTIWTSGSSISFCGVNSDTVGWSWPDGAELPFTIDK</sequence>
<reference key="1">
    <citation type="journal article" date="1984" name="Virology">
        <title>Sequence of the neuraminidase gene of an avian influenza A virus (A/parrot/ulster/73, H7N1).</title>
        <authorList>
            <person name="Steuler H."/>
            <person name="Rohde W."/>
            <person name="Scholtissek C."/>
        </authorList>
    </citation>
    <scope>NUCLEOTIDE SEQUENCE [GENOMIC RNA]</scope>
</reference>
<reference key="2">
    <citation type="journal article" date="2004" name="Virus Res.">
        <title>Assembly and budding of influenza virus.</title>
        <authorList>
            <person name="Nayak D.P."/>
            <person name="Hui E.K."/>
            <person name="Barman S."/>
        </authorList>
    </citation>
    <scope>REVIEW</scope>
</reference>
<reference key="3">
    <citation type="journal article" date="2005" name="N. Engl. J. Med.">
        <title>Neuraminidase inhibitors for influenza.</title>
        <authorList>
            <person name="Moscona A."/>
        </authorList>
    </citation>
    <scope>REVIEW</scope>
</reference>
<reference key="4">
    <citation type="journal article" date="2005" name="Biol. Pharm. Bull.">
        <title>Sialobiology of influenza: molecular mechanism of host range variation of influenza viruses.</title>
        <authorList>
            <person name="Suzuki Y."/>
        </authorList>
    </citation>
    <scope>REVIEW</scope>
</reference>
<dbReference type="EC" id="3.2.1.18" evidence="1"/>
<dbReference type="EMBL" id="K02252">
    <property type="protein sequence ID" value="AAA43377.1"/>
    <property type="molecule type" value="Genomic_RNA"/>
</dbReference>
<dbReference type="SMR" id="P06819"/>
<dbReference type="CAZy" id="GH34">
    <property type="family name" value="Glycoside Hydrolase Family 34"/>
</dbReference>
<dbReference type="GlyCosmos" id="P06819">
    <property type="glycosylation" value="7 sites, No reported glycans"/>
</dbReference>
<dbReference type="GO" id="GO:0020002">
    <property type="term" value="C:host cell plasma membrane"/>
    <property type="evidence" value="ECO:0007669"/>
    <property type="project" value="UniProtKB-SubCell"/>
</dbReference>
<dbReference type="GO" id="GO:0016020">
    <property type="term" value="C:membrane"/>
    <property type="evidence" value="ECO:0007669"/>
    <property type="project" value="UniProtKB-UniRule"/>
</dbReference>
<dbReference type="GO" id="GO:0055036">
    <property type="term" value="C:virion membrane"/>
    <property type="evidence" value="ECO:0007669"/>
    <property type="project" value="UniProtKB-SubCell"/>
</dbReference>
<dbReference type="GO" id="GO:0004308">
    <property type="term" value="F:exo-alpha-sialidase activity"/>
    <property type="evidence" value="ECO:0007669"/>
    <property type="project" value="UniProtKB-UniRule"/>
</dbReference>
<dbReference type="GO" id="GO:0046872">
    <property type="term" value="F:metal ion binding"/>
    <property type="evidence" value="ECO:0007669"/>
    <property type="project" value="UniProtKB-UniRule"/>
</dbReference>
<dbReference type="GO" id="GO:0005975">
    <property type="term" value="P:carbohydrate metabolic process"/>
    <property type="evidence" value="ECO:0007669"/>
    <property type="project" value="InterPro"/>
</dbReference>
<dbReference type="GO" id="GO:0046761">
    <property type="term" value="P:viral budding from plasma membrane"/>
    <property type="evidence" value="ECO:0007669"/>
    <property type="project" value="UniProtKB-UniRule"/>
</dbReference>
<dbReference type="CDD" id="cd15483">
    <property type="entry name" value="Influenza_NA"/>
    <property type="match status" value="1"/>
</dbReference>
<dbReference type="FunFam" id="2.120.10.10:FF:000001">
    <property type="entry name" value="Neuraminidase"/>
    <property type="match status" value="1"/>
</dbReference>
<dbReference type="Gene3D" id="2.120.10.10">
    <property type="match status" value="1"/>
</dbReference>
<dbReference type="HAMAP" id="MF_04071">
    <property type="entry name" value="INFV_NRAM"/>
    <property type="match status" value="1"/>
</dbReference>
<dbReference type="InterPro" id="IPR001860">
    <property type="entry name" value="Glyco_hydro_34"/>
</dbReference>
<dbReference type="InterPro" id="IPR033654">
    <property type="entry name" value="Sialidase_Influenza_A/B"/>
</dbReference>
<dbReference type="InterPro" id="IPR036278">
    <property type="entry name" value="Sialidase_sf"/>
</dbReference>
<dbReference type="Pfam" id="PF00064">
    <property type="entry name" value="Neur"/>
    <property type="match status" value="1"/>
</dbReference>
<dbReference type="SUPFAM" id="SSF50939">
    <property type="entry name" value="Sialidases"/>
    <property type="match status" value="1"/>
</dbReference>
<accession>P06819</accession>
<keyword id="KW-0106">Calcium</keyword>
<keyword id="KW-1015">Disulfide bond</keyword>
<keyword id="KW-0325">Glycoprotein</keyword>
<keyword id="KW-0326">Glycosidase</keyword>
<keyword id="KW-1032">Host cell membrane</keyword>
<keyword id="KW-1043">Host membrane</keyword>
<keyword id="KW-0378">Hydrolase</keyword>
<keyword id="KW-0472">Membrane</keyword>
<keyword id="KW-0479">Metal-binding</keyword>
<keyword id="KW-0735">Signal-anchor</keyword>
<keyword id="KW-0812">Transmembrane</keyword>
<keyword id="KW-1133">Transmembrane helix</keyword>
<keyword id="KW-0946">Virion</keyword>
<organismHost>
    <name type="scientific">Aves</name>
    <dbReference type="NCBI Taxonomy" id="8782"/>
</organismHost>
<feature type="chain" id="PRO_0000078711" description="Neuraminidase">
    <location>
        <begin position="1"/>
        <end position="469"/>
    </location>
</feature>
<feature type="topological domain" description="Intravirion" evidence="1">
    <location>
        <begin position="1"/>
        <end position="6"/>
    </location>
</feature>
<feature type="transmembrane region" description="Helical" evidence="1">
    <location>
        <begin position="7"/>
        <end position="27"/>
    </location>
</feature>
<feature type="topological domain" description="Virion surface" evidence="1">
    <location>
        <begin position="28"/>
        <end position="469"/>
    </location>
</feature>
<feature type="region of interest" description="Involved in apical transport and lipid raft association" evidence="1">
    <location>
        <begin position="11"/>
        <end position="33"/>
    </location>
</feature>
<feature type="region of interest" description="Hypervariable stalk region" evidence="1">
    <location>
        <begin position="36"/>
        <end position="90"/>
    </location>
</feature>
<feature type="region of interest" description="Head of neuraminidase" evidence="1">
    <location>
        <begin position="91"/>
        <end position="469"/>
    </location>
</feature>
<feature type="active site" description="Proton donor/acceptor" evidence="1">
    <location>
        <position position="151"/>
    </location>
</feature>
<feature type="active site" description="Nucleophile" evidence="1">
    <location>
        <position position="402"/>
    </location>
</feature>
<feature type="binding site" evidence="1">
    <location>
        <position position="118"/>
    </location>
    <ligand>
        <name>substrate</name>
    </ligand>
</feature>
<feature type="binding site" evidence="1">
    <location>
        <position position="152"/>
    </location>
    <ligand>
        <name>substrate</name>
    </ligand>
</feature>
<feature type="binding site" evidence="1">
    <location>
        <begin position="277"/>
        <end position="278"/>
    </location>
    <ligand>
        <name>substrate</name>
    </ligand>
</feature>
<feature type="binding site" evidence="1">
    <location>
        <position position="293"/>
    </location>
    <ligand>
        <name>substrate</name>
    </ligand>
</feature>
<feature type="binding site" evidence="1">
    <location>
        <position position="294"/>
    </location>
    <ligand>
        <name>Ca(2+)</name>
        <dbReference type="ChEBI" id="CHEBI:29108"/>
    </ligand>
</feature>
<feature type="binding site" evidence="1">
    <location>
        <position position="298"/>
    </location>
    <ligand>
        <name>Ca(2+)</name>
        <dbReference type="ChEBI" id="CHEBI:29108"/>
    </ligand>
</feature>
<feature type="binding site" evidence="1">
    <location>
        <position position="324"/>
    </location>
    <ligand>
        <name>Ca(2+)</name>
        <dbReference type="ChEBI" id="CHEBI:29108"/>
    </ligand>
</feature>
<feature type="binding site" evidence="1">
    <location>
        <position position="368"/>
    </location>
    <ligand>
        <name>substrate</name>
    </ligand>
</feature>
<feature type="glycosylation site" description="N-linked (GlcNAc...) asparagine; by host" evidence="1">
    <location>
        <position position="50"/>
    </location>
</feature>
<feature type="glycosylation site" description="N-linked (GlcNAc...) asparagine; by host" evidence="1">
    <location>
        <position position="58"/>
    </location>
</feature>
<feature type="glycosylation site" description="N-linked (GlcNAc...) asparagine; by host" evidence="1">
    <location>
        <position position="63"/>
    </location>
</feature>
<feature type="glycosylation site" description="N-linked (GlcNAc...) asparagine; by host" evidence="1">
    <location>
        <position position="68"/>
    </location>
</feature>
<feature type="glycosylation site" description="N-linked (GlcNAc...) asparagine; by host" evidence="1">
    <location>
        <position position="88"/>
    </location>
</feature>
<feature type="glycosylation site" description="N-linked (GlcNAc...) asparagine; by host" evidence="1">
    <location>
        <position position="146"/>
    </location>
</feature>
<feature type="glycosylation site" description="N-linked (GlcNAc...) asparagine; by host" evidence="1">
    <location>
        <position position="235"/>
    </location>
</feature>
<feature type="disulfide bond" evidence="1">
    <location>
        <begin position="92"/>
        <end position="417"/>
    </location>
</feature>
<feature type="disulfide bond" evidence="1">
    <location>
        <begin position="124"/>
        <end position="129"/>
    </location>
</feature>
<feature type="disulfide bond" evidence="1">
    <location>
        <begin position="184"/>
        <end position="231"/>
    </location>
</feature>
<feature type="disulfide bond" evidence="1">
    <location>
        <begin position="233"/>
        <end position="238"/>
    </location>
</feature>
<feature type="disulfide bond" evidence="1">
    <location>
        <begin position="279"/>
        <end position="292"/>
    </location>
</feature>
<feature type="disulfide bond" evidence="1">
    <location>
        <begin position="281"/>
        <end position="290"/>
    </location>
</feature>
<feature type="disulfide bond" evidence="1">
    <location>
        <begin position="318"/>
        <end position="335"/>
    </location>
</feature>
<feature type="disulfide bond" evidence="1">
    <location>
        <begin position="421"/>
        <end position="446"/>
    </location>
</feature>
<gene>
    <name evidence="1" type="primary">NA</name>
</gene>
<name>NRAM_I73A0</name>
<protein>
    <recommendedName>
        <fullName evidence="1">Neuraminidase</fullName>
        <ecNumber evidence="1">3.2.1.18</ecNumber>
    </recommendedName>
</protein>
<organism>
    <name type="scientific">Influenza A virus (strain A/Parrot/Ulster/1973 H7N1)</name>
    <dbReference type="NCBI Taxonomy" id="11448"/>
    <lineage>
        <taxon>Viruses</taxon>
        <taxon>Riboviria</taxon>
        <taxon>Orthornavirae</taxon>
        <taxon>Negarnaviricota</taxon>
        <taxon>Polyploviricotina</taxon>
        <taxon>Insthoviricetes</taxon>
        <taxon>Articulavirales</taxon>
        <taxon>Orthomyxoviridae</taxon>
        <taxon>Alphainfluenzavirus</taxon>
        <taxon>Alphainfluenzavirus influenzae</taxon>
        <taxon>Influenza A virus</taxon>
    </lineage>
</organism>
<comment type="function">
    <text evidence="1">Catalyzes the removal of terminal sialic acid residues from viral and cellular glycoconjugates. Cleaves off the terminal sialic acids on the glycosylated HA during virus budding to facilitate virus release. Additionally helps virus spread through the circulation by further removing sialic acids from the cell surface. These cleavages prevent self-aggregation and ensure the efficient spread of the progeny virus from cell to cell. Otherwise, infection would be limited to one round of replication. Described as a receptor-destroying enzyme because it cleaves a terminal sialic acid from the cellular receptors. May facilitate viral invasion of the upper airways by cleaving the sialic acid moieties on the mucin of the airway epithelial cells. Likely to plays a role in the budding process through its association with lipid rafts during intracellular transport. May additionally display a raft-association independent effect on budding. Plays a role in the determination of host range restriction on replication and virulence. Sialidase activity in late endosome/lysosome traffic seems to enhance virus replication.</text>
</comment>
<comment type="catalytic activity">
    <reaction evidence="1">
        <text>Hydrolysis of alpha-(2-&gt;3)-, alpha-(2-&gt;6)-, alpha-(2-&gt;8)- glycosidic linkages of terminal sialic acid residues in oligosaccharides, glycoproteins, glycolipids, colominic acid and synthetic substrates.</text>
        <dbReference type="EC" id="3.2.1.18"/>
    </reaction>
</comment>
<comment type="cofactor">
    <cofactor evidence="1">
        <name>Ca(2+)</name>
        <dbReference type="ChEBI" id="CHEBI:29108"/>
    </cofactor>
</comment>
<comment type="activity regulation">
    <text evidence="1">Inhibited by the neuraminidase inhibitors zanamivir (Relenza) and oseltamivir (Tamiflu). These drugs interfere with the release of progeny virus from infected cells and are effective against all influenza strains. Resistance to neuraminidase inhibitors is quite rare.</text>
</comment>
<comment type="subunit">
    <text evidence="1">Homotetramer.</text>
</comment>
<comment type="subcellular location">
    <subcellularLocation>
        <location evidence="1">Virion membrane</location>
    </subcellularLocation>
    <subcellularLocation>
        <location evidence="1">Host apical cell membrane</location>
        <topology evidence="1">Single-pass type II membrane protein</topology>
    </subcellularLocation>
    <text evidence="1">Preferentially accumulates at the apical plasma membrane in infected polarized epithelial cells, which is the virus assembly site. Uses lipid rafts for cell surface transport and apical sorting. In the virion, forms a mushroom-shaped spike on the surface of the membrane.</text>
</comment>
<comment type="domain">
    <text evidence="1">Intact N-terminus is essential for virion morphogenesis. Possesses two apical sorting signals, one in the ectodomain, which is likely to be a glycan, and the other in the transmembrane domain. The transmembrane domain also plays a role in lipid raft association.</text>
</comment>
<comment type="PTM">
    <text evidence="1">N-glycosylated.</text>
</comment>
<comment type="miscellaneous">
    <text>The influenza A genome consist of 8 RNA segments. Genetic variation of hemagglutinin and/or neuraminidase genes results in the emergence of new influenza strains. The mechanism of variation can be the result of point mutations or the result of genetic reassortment between segments of two different strains.</text>
</comment>
<comment type="similarity">
    <text evidence="1">Belongs to the glycosyl hydrolase 34 family.</text>
</comment>